<gene>
    <name type="primary">ASB2</name>
</gene>
<keyword id="KW-0025">Alternative splicing</keyword>
<keyword id="KW-0040">ANK repeat</keyword>
<keyword id="KW-0963">Cytoplasm</keyword>
<keyword id="KW-0206">Cytoskeleton</keyword>
<keyword id="KW-0597">Phosphoprotein</keyword>
<keyword id="KW-1267">Proteomics identification</keyword>
<keyword id="KW-1185">Reference proteome</keyword>
<keyword id="KW-0677">Repeat</keyword>
<keyword id="KW-0832">Ubl conjugation</keyword>
<keyword id="KW-0833">Ubl conjugation pathway</keyword>
<name>ASB2_HUMAN</name>
<organism>
    <name type="scientific">Homo sapiens</name>
    <name type="common">Human</name>
    <dbReference type="NCBI Taxonomy" id="9606"/>
    <lineage>
        <taxon>Eukaryota</taxon>
        <taxon>Metazoa</taxon>
        <taxon>Chordata</taxon>
        <taxon>Craniata</taxon>
        <taxon>Vertebrata</taxon>
        <taxon>Euteleostomi</taxon>
        <taxon>Mammalia</taxon>
        <taxon>Eutheria</taxon>
        <taxon>Euarchontoglires</taxon>
        <taxon>Primates</taxon>
        <taxon>Haplorrhini</taxon>
        <taxon>Catarrhini</taxon>
        <taxon>Hominidae</taxon>
        <taxon>Homo</taxon>
    </lineage>
</organism>
<evidence type="ECO:0000250" key="1">
    <source>
        <dbReference type="UniProtKB" id="Q8K0L0"/>
    </source>
</evidence>
<evidence type="ECO:0000255" key="2"/>
<evidence type="ECO:0000255" key="3">
    <source>
        <dbReference type="PROSITE-ProRule" id="PRU00194"/>
    </source>
</evidence>
<evidence type="ECO:0000255" key="4">
    <source>
        <dbReference type="PROSITE-ProRule" id="PRU00213"/>
    </source>
</evidence>
<evidence type="ECO:0000269" key="5">
    <source>
    </source>
</evidence>
<evidence type="ECO:0000269" key="6">
    <source>
    </source>
</evidence>
<evidence type="ECO:0000269" key="7">
    <source>
    </source>
</evidence>
<evidence type="ECO:0000269" key="8">
    <source>
    </source>
</evidence>
<evidence type="ECO:0000269" key="9">
    <source>
    </source>
</evidence>
<evidence type="ECO:0000269" key="10">
    <source>
    </source>
</evidence>
<evidence type="ECO:0000269" key="11">
    <source>
    </source>
</evidence>
<evidence type="ECO:0000269" key="12">
    <source>
    </source>
</evidence>
<evidence type="ECO:0000269" key="13">
    <source>
    </source>
</evidence>
<evidence type="ECO:0000269" key="14">
    <source>
    </source>
</evidence>
<evidence type="ECO:0000269" key="15">
    <source>
    </source>
</evidence>
<evidence type="ECO:0000269" key="16">
    <source>
    </source>
</evidence>
<evidence type="ECO:0000269" key="17">
    <source>
    </source>
</evidence>
<evidence type="ECO:0000269" key="18">
    <source>
    </source>
</evidence>
<evidence type="ECO:0000303" key="19">
    <source>
    </source>
</evidence>
<evidence type="ECO:0000305" key="20"/>
<dbReference type="EMBL" id="AB056723">
    <property type="protein sequence ID" value="BAB64532.1"/>
    <property type="molecule type" value="mRNA"/>
</dbReference>
<dbReference type="EMBL" id="AJ251238">
    <property type="protein sequence ID" value="CAC17765.1"/>
    <property type="molecule type" value="mRNA"/>
</dbReference>
<dbReference type="EMBL" id="AB488462">
    <property type="protein sequence ID" value="BAI77868.1"/>
    <property type="molecule type" value="mRNA"/>
</dbReference>
<dbReference type="EMBL" id="AK303686">
    <property type="protein sequence ID" value="BAG64678.1"/>
    <property type="molecule type" value="mRNA"/>
</dbReference>
<dbReference type="EMBL" id="AK315628">
    <property type="protein sequence ID" value="BAG37996.1"/>
    <property type="molecule type" value="mRNA"/>
</dbReference>
<dbReference type="EMBL" id="AL079302">
    <property type="status" value="NOT_ANNOTATED_CDS"/>
    <property type="molecule type" value="Genomic_DNA"/>
</dbReference>
<dbReference type="EMBL" id="AL132642">
    <property type="status" value="NOT_ANNOTATED_CDS"/>
    <property type="molecule type" value="Genomic_DNA"/>
</dbReference>
<dbReference type="EMBL" id="CH471061">
    <property type="protein sequence ID" value="EAW81540.1"/>
    <property type="molecule type" value="Genomic_DNA"/>
</dbReference>
<dbReference type="EMBL" id="CH471061">
    <property type="protein sequence ID" value="EAW81542.1"/>
    <property type="molecule type" value="Genomic_DNA"/>
</dbReference>
<dbReference type="EMBL" id="BC032354">
    <property type="protein sequence ID" value="AAH32354.1"/>
    <property type="molecule type" value="mRNA"/>
</dbReference>
<dbReference type="EMBL" id="AL137735">
    <property type="protein sequence ID" value="CAB70899.1"/>
    <property type="molecule type" value="mRNA"/>
</dbReference>
<dbReference type="EMBL" id="AF159164">
    <property type="protein sequence ID" value="AAD45345.1"/>
    <property type="molecule type" value="mRNA"/>
</dbReference>
<dbReference type="CCDS" id="CCDS55940.1">
    <molecule id="Q96Q27-2"/>
</dbReference>
<dbReference type="CCDS" id="CCDS9915.1">
    <molecule id="Q96Q27-1"/>
</dbReference>
<dbReference type="PIR" id="T46507">
    <property type="entry name" value="T46507"/>
</dbReference>
<dbReference type="RefSeq" id="NP_001189358.1">
    <molecule id="Q96Q27-2"/>
    <property type="nucleotide sequence ID" value="NM_001202429.2"/>
</dbReference>
<dbReference type="RefSeq" id="NP_057234.2">
    <molecule id="Q96Q27-1"/>
    <property type="nucleotide sequence ID" value="NM_016150.4"/>
</dbReference>
<dbReference type="RefSeq" id="XP_005267815.1">
    <molecule id="Q96Q27-2"/>
    <property type="nucleotide sequence ID" value="XM_005267758.4"/>
</dbReference>
<dbReference type="RefSeq" id="XP_054184955.1">
    <molecule id="Q96Q27-2"/>
    <property type="nucleotide sequence ID" value="XM_054328980.1"/>
</dbReference>
<dbReference type="RefSeq" id="XP_054232186.1">
    <molecule id="Q96Q27-2"/>
    <property type="nucleotide sequence ID" value="XM_054376211.1"/>
</dbReference>
<dbReference type="SMR" id="Q96Q27"/>
<dbReference type="BioGRID" id="119674">
    <property type="interactions" value="49"/>
</dbReference>
<dbReference type="CORUM" id="Q96Q27"/>
<dbReference type="FunCoup" id="Q96Q27">
    <property type="interactions" value="87"/>
</dbReference>
<dbReference type="IntAct" id="Q96Q27">
    <property type="interactions" value="9"/>
</dbReference>
<dbReference type="MINT" id="Q96Q27"/>
<dbReference type="STRING" id="9606.ENSP00000451575"/>
<dbReference type="iPTMnet" id="Q96Q27"/>
<dbReference type="PhosphoSitePlus" id="Q96Q27"/>
<dbReference type="BioMuta" id="ASB2"/>
<dbReference type="DMDM" id="20531999"/>
<dbReference type="jPOST" id="Q96Q27"/>
<dbReference type="MassIVE" id="Q96Q27"/>
<dbReference type="PaxDb" id="9606-ENSP00000451575"/>
<dbReference type="PeptideAtlas" id="Q96Q27"/>
<dbReference type="ProteomicsDB" id="77816">
    <molecule id="Q96Q27-1"/>
</dbReference>
<dbReference type="ProteomicsDB" id="77817">
    <molecule id="Q96Q27-2"/>
</dbReference>
<dbReference type="Antibodypedia" id="16">
    <property type="antibodies" value="192 antibodies from 27 providers"/>
</dbReference>
<dbReference type="DNASU" id="51676"/>
<dbReference type="Ensembl" id="ENST00000315988.8">
    <molecule id="Q96Q27-1"/>
    <property type="protein sequence ID" value="ENSP00000320675.4"/>
    <property type="gene ID" value="ENSG00000100628.12"/>
</dbReference>
<dbReference type="Ensembl" id="ENST00000555019.6">
    <molecule id="Q96Q27-2"/>
    <property type="protein sequence ID" value="ENSP00000451575.1"/>
    <property type="gene ID" value="ENSG00000100628.12"/>
</dbReference>
<dbReference type="Ensembl" id="ENST00000612647.3">
    <molecule id="Q96Q27-2"/>
    <property type="protein sequence ID" value="ENSP00000480388.1"/>
    <property type="gene ID" value="ENSG00000278693.3"/>
</dbReference>
<dbReference type="Ensembl" id="ENST00000629617.2">
    <molecule id="Q96Q27-1"/>
    <property type="protein sequence ID" value="ENSP00000487399.1"/>
    <property type="gene ID" value="ENSG00000278693.3"/>
</dbReference>
<dbReference type="GeneID" id="51676"/>
<dbReference type="KEGG" id="hsa:51676"/>
<dbReference type="MANE-Select" id="ENST00000555019.6">
    <property type="protein sequence ID" value="ENSP00000451575.1"/>
    <property type="RefSeq nucleotide sequence ID" value="NM_001202429.2"/>
    <property type="RefSeq protein sequence ID" value="NP_001189358.1"/>
</dbReference>
<dbReference type="UCSC" id="uc001ycc.3">
    <molecule id="Q96Q27-2"/>
    <property type="organism name" value="human"/>
</dbReference>
<dbReference type="AGR" id="HGNC:16012"/>
<dbReference type="CTD" id="51676"/>
<dbReference type="DisGeNET" id="51676"/>
<dbReference type="GeneCards" id="ASB2"/>
<dbReference type="HGNC" id="HGNC:16012">
    <property type="gene designation" value="ASB2"/>
</dbReference>
<dbReference type="HPA" id="ENSG00000100628">
    <property type="expression patterns" value="Group enriched (skeletal muscle, tongue)"/>
</dbReference>
<dbReference type="MIM" id="605759">
    <property type="type" value="gene"/>
</dbReference>
<dbReference type="neXtProt" id="NX_Q96Q27"/>
<dbReference type="OpenTargets" id="ENSG00000100628"/>
<dbReference type="PharmGKB" id="PA25030"/>
<dbReference type="VEuPathDB" id="HostDB:ENSG00000100628"/>
<dbReference type="eggNOG" id="KOG0504">
    <property type="taxonomic scope" value="Eukaryota"/>
</dbReference>
<dbReference type="GeneTree" id="ENSGT00940000155490"/>
<dbReference type="InParanoid" id="Q96Q27"/>
<dbReference type="OMA" id="WTCIKEK"/>
<dbReference type="OrthoDB" id="539213at2759"/>
<dbReference type="PAN-GO" id="Q96Q27">
    <property type="GO annotations" value="3 GO annotations based on evolutionary models"/>
</dbReference>
<dbReference type="PhylomeDB" id="Q96Q27"/>
<dbReference type="TreeFam" id="TF315127"/>
<dbReference type="PathwayCommons" id="Q96Q27"/>
<dbReference type="Reactome" id="R-HSA-8951664">
    <property type="pathway name" value="Neddylation"/>
</dbReference>
<dbReference type="Reactome" id="R-HSA-983168">
    <property type="pathway name" value="Antigen processing: Ubiquitination &amp; Proteasome degradation"/>
</dbReference>
<dbReference type="SignaLink" id="Q96Q27"/>
<dbReference type="SIGNOR" id="Q96Q27"/>
<dbReference type="UniPathway" id="UPA00143"/>
<dbReference type="BioGRID-ORCS" id="51676">
    <property type="hits" value="8 hits in 1179 CRISPR screens"/>
</dbReference>
<dbReference type="ChiTaRS" id="ASB2">
    <property type="organism name" value="human"/>
</dbReference>
<dbReference type="GeneWiki" id="ASB2"/>
<dbReference type="GenomeRNAi" id="51676"/>
<dbReference type="Pharos" id="Q96Q27">
    <property type="development level" value="Tbio"/>
</dbReference>
<dbReference type="PRO" id="PR:Q96Q27"/>
<dbReference type="Proteomes" id="UP000005640">
    <property type="component" value="Chromosome 14"/>
</dbReference>
<dbReference type="RNAct" id="Q96Q27">
    <property type="molecule type" value="protein"/>
</dbReference>
<dbReference type="Bgee" id="ENSG00000100628">
    <property type="expression patterns" value="Expressed in skeletal muscle tissue and 104 other cell types or tissues"/>
</dbReference>
<dbReference type="ExpressionAtlas" id="Q96Q27">
    <property type="expression patterns" value="baseline and differential"/>
</dbReference>
<dbReference type="GO" id="GO:0005737">
    <property type="term" value="C:cytoplasm"/>
    <property type="evidence" value="ECO:0000318"/>
    <property type="project" value="GO_Central"/>
</dbReference>
<dbReference type="GO" id="GO:0005829">
    <property type="term" value="C:cytosol"/>
    <property type="evidence" value="ECO:0000304"/>
    <property type="project" value="Reactome"/>
</dbReference>
<dbReference type="GO" id="GO:0005634">
    <property type="term" value="C:nucleus"/>
    <property type="evidence" value="ECO:0000318"/>
    <property type="project" value="GO_Central"/>
</dbReference>
<dbReference type="GO" id="GO:0001725">
    <property type="term" value="C:stress fiber"/>
    <property type="evidence" value="ECO:0007669"/>
    <property type="project" value="UniProtKB-SubCell"/>
</dbReference>
<dbReference type="GO" id="GO:0000151">
    <property type="term" value="C:ubiquitin ligase complex"/>
    <property type="evidence" value="ECO:0000314"/>
    <property type="project" value="UniProtKB"/>
</dbReference>
<dbReference type="GO" id="GO:0030018">
    <property type="term" value="C:Z disc"/>
    <property type="evidence" value="ECO:0000250"/>
    <property type="project" value="UniProtKB"/>
</dbReference>
<dbReference type="GO" id="GO:0097602">
    <property type="term" value="F:cullin family protein binding"/>
    <property type="evidence" value="ECO:0000353"/>
    <property type="project" value="UniProtKB"/>
</dbReference>
<dbReference type="GO" id="GO:0030036">
    <property type="term" value="P:actin cytoskeleton organization"/>
    <property type="evidence" value="ECO:0000250"/>
    <property type="project" value="UniProtKB"/>
</dbReference>
<dbReference type="GO" id="GO:0055013">
    <property type="term" value="P:cardiac muscle cell development"/>
    <property type="evidence" value="ECO:0000250"/>
    <property type="project" value="UniProtKB"/>
</dbReference>
<dbReference type="GO" id="GO:0055007">
    <property type="term" value="P:cardiac muscle cell differentiation"/>
    <property type="evidence" value="ECO:0000315"/>
    <property type="project" value="UniProtKB"/>
</dbReference>
<dbReference type="GO" id="GO:0036336">
    <property type="term" value="P:dendritic cell migration"/>
    <property type="evidence" value="ECO:0000250"/>
    <property type="project" value="UniProtKB"/>
</dbReference>
<dbReference type="GO" id="GO:0001947">
    <property type="term" value="P:heart looping"/>
    <property type="evidence" value="ECO:0007669"/>
    <property type="project" value="Ensembl"/>
</dbReference>
<dbReference type="GO" id="GO:0035556">
    <property type="term" value="P:intracellular signal transduction"/>
    <property type="evidence" value="ECO:0007669"/>
    <property type="project" value="InterPro"/>
</dbReference>
<dbReference type="GO" id="GO:0071800">
    <property type="term" value="P:podosome assembly"/>
    <property type="evidence" value="ECO:0000250"/>
    <property type="project" value="UniProtKB"/>
</dbReference>
<dbReference type="GO" id="GO:0043161">
    <property type="term" value="P:proteasome-mediated ubiquitin-dependent protein catabolic process"/>
    <property type="evidence" value="ECO:0000315"/>
    <property type="project" value="UniProtKB"/>
</dbReference>
<dbReference type="GO" id="GO:0016567">
    <property type="term" value="P:protein ubiquitination"/>
    <property type="evidence" value="ECO:0000314"/>
    <property type="project" value="UniProtKB"/>
</dbReference>
<dbReference type="GO" id="GO:2000812">
    <property type="term" value="P:regulation of barbed-end actin filament capping"/>
    <property type="evidence" value="ECO:0000318"/>
    <property type="project" value="GO_Central"/>
</dbReference>
<dbReference type="GO" id="GO:0007165">
    <property type="term" value="P:signal transduction"/>
    <property type="evidence" value="ECO:0000304"/>
    <property type="project" value="ProtInc"/>
</dbReference>
<dbReference type="GO" id="GO:0014732">
    <property type="term" value="P:skeletal muscle atrophy"/>
    <property type="evidence" value="ECO:0000250"/>
    <property type="project" value="UniProtKB"/>
</dbReference>
<dbReference type="GO" id="GO:0035914">
    <property type="term" value="P:skeletal muscle cell differentiation"/>
    <property type="evidence" value="ECO:0007669"/>
    <property type="project" value="Ensembl"/>
</dbReference>
<dbReference type="GO" id="GO:0006511">
    <property type="term" value="P:ubiquitin-dependent protein catabolic process"/>
    <property type="evidence" value="ECO:0000314"/>
    <property type="project" value="UniProtKB"/>
</dbReference>
<dbReference type="CDD" id="cd03721">
    <property type="entry name" value="SOCS_ASB2"/>
    <property type="match status" value="1"/>
</dbReference>
<dbReference type="FunFam" id="1.10.750.20:FF:000001">
    <property type="entry name" value="Ankyrin repeat and SOCS box containing 1"/>
    <property type="match status" value="1"/>
</dbReference>
<dbReference type="FunFam" id="1.25.40.20:FF:000246">
    <property type="entry name" value="Ankyrin repeat and SOCS box containing 2"/>
    <property type="match status" value="1"/>
</dbReference>
<dbReference type="FunFam" id="1.25.40.20:FF:000254">
    <property type="entry name" value="Ankyrin repeat and SOCS box containing 2"/>
    <property type="match status" value="1"/>
</dbReference>
<dbReference type="FunFam" id="1.25.40.20:FF:000905">
    <property type="entry name" value="Ankyrin repeat and SOCS box protein 2"/>
    <property type="match status" value="1"/>
</dbReference>
<dbReference type="Gene3D" id="1.25.40.20">
    <property type="entry name" value="Ankyrin repeat-containing domain"/>
    <property type="match status" value="3"/>
</dbReference>
<dbReference type="Gene3D" id="1.10.750.20">
    <property type="entry name" value="SOCS box"/>
    <property type="match status" value="1"/>
</dbReference>
<dbReference type="InterPro" id="IPR002110">
    <property type="entry name" value="Ankyrin_rpt"/>
</dbReference>
<dbReference type="InterPro" id="IPR036770">
    <property type="entry name" value="Ankyrin_rpt-contain_sf"/>
</dbReference>
<dbReference type="InterPro" id="IPR037330">
    <property type="entry name" value="ASB2_SOCS"/>
</dbReference>
<dbReference type="InterPro" id="IPR001496">
    <property type="entry name" value="SOCS_box"/>
</dbReference>
<dbReference type="InterPro" id="IPR036036">
    <property type="entry name" value="SOCS_box-like_dom_sf"/>
</dbReference>
<dbReference type="PANTHER" id="PTHR24198">
    <property type="entry name" value="ANKYRIN REPEAT AND PROTEIN KINASE DOMAIN-CONTAINING PROTEIN"/>
    <property type="match status" value="1"/>
</dbReference>
<dbReference type="PANTHER" id="PTHR24198:SF165">
    <property type="entry name" value="ANKYRIN REPEAT-CONTAINING PROTEIN-RELATED"/>
    <property type="match status" value="1"/>
</dbReference>
<dbReference type="Pfam" id="PF12796">
    <property type="entry name" value="Ank_2"/>
    <property type="match status" value="3"/>
</dbReference>
<dbReference type="Pfam" id="PF13606">
    <property type="entry name" value="Ank_3"/>
    <property type="match status" value="1"/>
</dbReference>
<dbReference type="Pfam" id="PF13637">
    <property type="entry name" value="Ank_4"/>
    <property type="match status" value="1"/>
</dbReference>
<dbReference type="Pfam" id="PF07525">
    <property type="entry name" value="SOCS_box"/>
    <property type="match status" value="1"/>
</dbReference>
<dbReference type="PRINTS" id="PR01415">
    <property type="entry name" value="ANKYRIN"/>
</dbReference>
<dbReference type="SMART" id="SM00248">
    <property type="entry name" value="ANK"/>
    <property type="match status" value="11"/>
</dbReference>
<dbReference type="SMART" id="SM00253">
    <property type="entry name" value="SOCS"/>
    <property type="match status" value="1"/>
</dbReference>
<dbReference type="SMART" id="SM00969">
    <property type="entry name" value="SOCS_box"/>
    <property type="match status" value="1"/>
</dbReference>
<dbReference type="SUPFAM" id="SSF48403">
    <property type="entry name" value="Ankyrin repeat"/>
    <property type="match status" value="1"/>
</dbReference>
<dbReference type="SUPFAM" id="SSF158235">
    <property type="entry name" value="SOCS box-like"/>
    <property type="match status" value="1"/>
</dbReference>
<dbReference type="PROSITE" id="PS50297">
    <property type="entry name" value="ANK_REP_REGION"/>
    <property type="match status" value="1"/>
</dbReference>
<dbReference type="PROSITE" id="PS50088">
    <property type="entry name" value="ANK_REPEAT"/>
    <property type="match status" value="9"/>
</dbReference>
<dbReference type="PROSITE" id="PS50225">
    <property type="entry name" value="SOCS"/>
    <property type="match status" value="1"/>
</dbReference>
<feature type="chain" id="PRO_0000066925" description="Ankyrin repeat and SOCS box protein 2">
    <location>
        <begin position="1"/>
        <end position="635"/>
    </location>
</feature>
<feature type="domain" description="UIM" evidence="4">
    <location>
        <begin position="26"/>
        <end position="45"/>
    </location>
</feature>
<feature type="repeat" description="ANK 1" evidence="2">
    <location>
        <begin position="104"/>
        <end position="133"/>
    </location>
</feature>
<feature type="repeat" description="ANK 2" evidence="2">
    <location>
        <begin position="137"/>
        <end position="167"/>
    </location>
</feature>
<feature type="repeat" description="ANK 3" evidence="2">
    <location>
        <begin position="171"/>
        <end position="200"/>
    </location>
</feature>
<feature type="repeat" description="ANK 4" evidence="2">
    <location>
        <begin position="204"/>
        <end position="233"/>
    </location>
</feature>
<feature type="repeat" description="ANK 5" evidence="2">
    <location>
        <begin position="237"/>
        <end position="266"/>
    </location>
</feature>
<feature type="repeat" description="ANK 6" evidence="2">
    <location>
        <begin position="270"/>
        <end position="299"/>
    </location>
</feature>
<feature type="repeat" description="ANK 7" evidence="2">
    <location>
        <begin position="303"/>
        <end position="332"/>
    </location>
</feature>
<feature type="repeat" description="ANK 8" evidence="2">
    <location>
        <begin position="336"/>
        <end position="365"/>
    </location>
</feature>
<feature type="repeat" description="ANK 9" evidence="2">
    <location>
        <begin position="368"/>
        <end position="397"/>
    </location>
</feature>
<feature type="repeat" description="ANK 10" evidence="2">
    <location>
        <begin position="410"/>
        <end position="439"/>
    </location>
</feature>
<feature type="repeat" description="ANK 11" evidence="2">
    <location>
        <begin position="440"/>
        <end position="469"/>
    </location>
</feature>
<feature type="repeat" description="ANK 12" evidence="2">
    <location>
        <begin position="476"/>
        <end position="504"/>
    </location>
</feature>
<feature type="domain" description="SOCS box" evidence="3">
    <location>
        <begin position="586"/>
        <end position="635"/>
    </location>
</feature>
<feature type="modified residue" description="Phosphoserine; by MAPK" evidence="14">
    <location>
        <position position="371"/>
    </location>
</feature>
<feature type="splice variant" id="VSP_061164" description="In isoform 2.">
    <original>MATQISTRGSQCTIGQEEYSLYSSLSEDELVQMAIEQSLADKTRGPTTAEATASACTNRQPAHFYPWT</original>
    <variation>MTRFSYAEYFSLFHSCSAPS</variation>
    <location>
        <begin position="1"/>
        <end position="68"/>
    </location>
</feature>
<feature type="sequence variant" id="VAR_022089" description="In dbSNP:rs2295213.">
    <original>P</original>
    <variation>S</variation>
    <location>
        <position position="208"/>
    </location>
</feature>
<feature type="mutagenesis site" description="Abolishes monoubiquitination." evidence="12">
    <original>EDE</original>
    <variation>AAA</variation>
    <location>
        <begin position="27"/>
        <end position="29"/>
    </location>
</feature>
<feature type="mutagenesis site" description="Abolishes monoubiquitination." evidence="12">
    <original>S</original>
    <variation>A</variation>
    <location>
        <position position="38"/>
    </location>
</feature>
<feature type="mutagenesis site" description="Abolishes phosphorylation. Abolishes degradation of FLNA. No effect on assembly into ubiquitin-protein ligase complex." evidence="14">
    <original>S</original>
    <variation>A</variation>
    <location>
        <position position="371"/>
    </location>
</feature>
<feature type="mutagenesis site" description="Phosphomimetic mutant. No effect on isoform 2 FLNA degradation. No effect on assembly into ubiquitin-protein ligase complex." evidence="14">
    <original>S</original>
    <variation>D</variation>
    <location>
        <position position="371"/>
    </location>
</feature>
<feature type="mutagenesis site" description="No interaction with Elongin BC complex." evidence="7">
    <original>L</original>
    <variation>P</variation>
    <location>
        <position position="596"/>
    </location>
</feature>
<feature type="mutagenesis site" description="No interaction with CUL5 or RNF7." evidence="8">
    <original>LC</original>
    <variation>PF</variation>
    <location>
        <begin position="599"/>
        <end position="600"/>
    </location>
</feature>
<feature type="mutagenesis site" description="No interaction with Elongin BC complex." evidence="7">
    <original>C</original>
    <variation>P</variation>
    <location>
        <position position="600"/>
    </location>
</feature>
<feature type="mutagenesis site" description="No interaction with CUL5 or RNF7." evidence="8">
    <original>LPLP</original>
    <variation>AAAA</variation>
    <location>
        <begin position="619"/>
        <end position="622"/>
    </location>
</feature>
<feature type="sequence conflict" description="In Ref. 9; AAD45345." evidence="20" ref="9">
    <location>
        <position position="224"/>
    </location>
</feature>
<feature type="sequence conflict" description="In Ref. 9; AAD45345." evidence="20" ref="9">
    <location>
        <position position="460"/>
    </location>
</feature>
<feature type="region of interest" description="Required for FLNA degradation" evidence="11">
    <location sequence="Q96Q27-1">
        <begin position="8"/>
        <end position="16"/>
    </location>
</feature>
<reference key="1">
    <citation type="journal article" date="2001" name="FEBS Lett.">
        <title>ATRA-regulated Asb-2 gene induced in differentiation of HL-60 leukemia cells.</title>
        <authorList>
            <person name="Kohroki J."/>
            <person name="Fujita S."/>
            <person name="Itoh N."/>
            <person name="Yamada Y."/>
            <person name="Imai H."/>
            <person name="Yumoto N."/>
            <person name="Nakanishi T."/>
            <person name="Tanaka K."/>
        </authorList>
    </citation>
    <scope>NUCLEOTIDE SEQUENCE [MRNA] (ISOFORM 2)</scope>
    <scope>INDUCTION</scope>
</reference>
<reference key="2">
    <citation type="journal article" date="2002" name="J. Biol. Chem.">
        <title>ASB-2 inhibits growth and promotes commitment in myeloid leukemia cells.</title>
        <authorList>
            <person name="Guibal F.C."/>
            <person name="Moog-Lutz C."/>
            <person name="Smolewski P."/>
            <person name="Di Gioia Y."/>
            <person name="Darzynkiewicz Z."/>
            <person name="Lutz P.G."/>
            <person name="Cayre Y.E."/>
        </authorList>
    </citation>
    <scope>NUCLEOTIDE SEQUENCE [MRNA] (ISOFORM 2)</scope>
    <scope>INDUCTION</scope>
</reference>
<reference key="3">
    <citation type="submission" date="2009-02" db="EMBL/GenBank/DDBJ databases">
        <title>Ubiquitin-interacting motif on ankyrin repeat and SOCS box-containing protein (ASB) 2a and its application to purify polyubiquitinated proteins and associated proteins without denaturation.</title>
        <authorList>
            <person name="Kohroki J."/>
            <person name="Kuroda S."/>
            <person name="Takiguchi E."/>
            <person name="Kawakami T."/>
            <person name="Nakamura T."/>
            <person name="Nishiyama T."/>
            <person name="Masuho Y."/>
        </authorList>
    </citation>
    <scope>NUCLEOTIDE SEQUENCE [MRNA] (ISOFORM 1)</scope>
</reference>
<reference key="4">
    <citation type="journal article" date="2004" name="Nat. Genet.">
        <title>Complete sequencing and characterization of 21,243 full-length human cDNAs.</title>
        <authorList>
            <person name="Ota T."/>
            <person name="Suzuki Y."/>
            <person name="Nishikawa T."/>
            <person name="Otsuki T."/>
            <person name="Sugiyama T."/>
            <person name="Irie R."/>
            <person name="Wakamatsu A."/>
            <person name="Hayashi K."/>
            <person name="Sato H."/>
            <person name="Nagai K."/>
            <person name="Kimura K."/>
            <person name="Makita H."/>
            <person name="Sekine M."/>
            <person name="Obayashi M."/>
            <person name="Nishi T."/>
            <person name="Shibahara T."/>
            <person name="Tanaka T."/>
            <person name="Ishii S."/>
            <person name="Yamamoto J."/>
            <person name="Saito K."/>
            <person name="Kawai Y."/>
            <person name="Isono Y."/>
            <person name="Nakamura Y."/>
            <person name="Nagahari K."/>
            <person name="Murakami K."/>
            <person name="Yasuda T."/>
            <person name="Iwayanagi T."/>
            <person name="Wagatsuma M."/>
            <person name="Shiratori A."/>
            <person name="Sudo H."/>
            <person name="Hosoiri T."/>
            <person name="Kaku Y."/>
            <person name="Kodaira H."/>
            <person name="Kondo H."/>
            <person name="Sugawara M."/>
            <person name="Takahashi M."/>
            <person name="Kanda K."/>
            <person name="Yokoi T."/>
            <person name="Furuya T."/>
            <person name="Kikkawa E."/>
            <person name="Omura Y."/>
            <person name="Abe K."/>
            <person name="Kamihara K."/>
            <person name="Katsuta N."/>
            <person name="Sato K."/>
            <person name="Tanikawa M."/>
            <person name="Yamazaki M."/>
            <person name="Ninomiya K."/>
            <person name="Ishibashi T."/>
            <person name="Yamashita H."/>
            <person name="Murakawa K."/>
            <person name="Fujimori K."/>
            <person name="Tanai H."/>
            <person name="Kimata M."/>
            <person name="Watanabe M."/>
            <person name="Hiraoka S."/>
            <person name="Chiba Y."/>
            <person name="Ishida S."/>
            <person name="Ono Y."/>
            <person name="Takiguchi S."/>
            <person name="Watanabe S."/>
            <person name="Yosida M."/>
            <person name="Hotuta T."/>
            <person name="Kusano J."/>
            <person name="Kanehori K."/>
            <person name="Takahashi-Fujii A."/>
            <person name="Hara H."/>
            <person name="Tanase T.-O."/>
            <person name="Nomura Y."/>
            <person name="Togiya S."/>
            <person name="Komai F."/>
            <person name="Hara R."/>
            <person name="Takeuchi K."/>
            <person name="Arita M."/>
            <person name="Imose N."/>
            <person name="Musashino K."/>
            <person name="Yuuki H."/>
            <person name="Oshima A."/>
            <person name="Sasaki N."/>
            <person name="Aotsuka S."/>
            <person name="Yoshikawa Y."/>
            <person name="Matsunawa H."/>
            <person name="Ichihara T."/>
            <person name="Shiohata N."/>
            <person name="Sano S."/>
            <person name="Moriya S."/>
            <person name="Momiyama H."/>
            <person name="Satoh N."/>
            <person name="Takami S."/>
            <person name="Terashima Y."/>
            <person name="Suzuki O."/>
            <person name="Nakagawa S."/>
            <person name="Senoh A."/>
            <person name="Mizoguchi H."/>
            <person name="Goto Y."/>
            <person name="Shimizu F."/>
            <person name="Wakebe H."/>
            <person name="Hishigaki H."/>
            <person name="Watanabe T."/>
            <person name="Sugiyama A."/>
            <person name="Takemoto M."/>
            <person name="Kawakami B."/>
            <person name="Yamazaki M."/>
            <person name="Watanabe K."/>
            <person name="Kumagai A."/>
            <person name="Itakura S."/>
            <person name="Fukuzumi Y."/>
            <person name="Fujimori Y."/>
            <person name="Komiyama M."/>
            <person name="Tashiro H."/>
            <person name="Tanigami A."/>
            <person name="Fujiwara T."/>
            <person name="Ono T."/>
            <person name="Yamada K."/>
            <person name="Fujii Y."/>
            <person name="Ozaki K."/>
            <person name="Hirao M."/>
            <person name="Ohmori Y."/>
            <person name="Kawabata A."/>
            <person name="Hikiji T."/>
            <person name="Kobatake N."/>
            <person name="Inagaki H."/>
            <person name="Ikema Y."/>
            <person name="Okamoto S."/>
            <person name="Okitani R."/>
            <person name="Kawakami T."/>
            <person name="Noguchi S."/>
            <person name="Itoh T."/>
            <person name="Shigeta K."/>
            <person name="Senba T."/>
            <person name="Matsumura K."/>
            <person name="Nakajima Y."/>
            <person name="Mizuno T."/>
            <person name="Morinaga M."/>
            <person name="Sasaki M."/>
            <person name="Togashi T."/>
            <person name="Oyama M."/>
            <person name="Hata H."/>
            <person name="Watanabe M."/>
            <person name="Komatsu T."/>
            <person name="Mizushima-Sugano J."/>
            <person name="Satoh T."/>
            <person name="Shirai Y."/>
            <person name="Takahashi Y."/>
            <person name="Nakagawa K."/>
            <person name="Okumura K."/>
            <person name="Nagase T."/>
            <person name="Nomura N."/>
            <person name="Kikuchi H."/>
            <person name="Masuho Y."/>
            <person name="Yamashita R."/>
            <person name="Nakai K."/>
            <person name="Yada T."/>
            <person name="Nakamura Y."/>
            <person name="Ohara O."/>
            <person name="Isogai T."/>
            <person name="Sugano S."/>
        </authorList>
    </citation>
    <scope>NUCLEOTIDE SEQUENCE [LARGE SCALE MRNA] (ISOFORMS 1 AND 2)</scope>
    <source>
        <tissue>Kidney</tissue>
        <tissue>Stomach</tissue>
    </source>
</reference>
<reference key="5">
    <citation type="journal article" date="2003" name="Nature">
        <title>The DNA sequence and analysis of human chromosome 14.</title>
        <authorList>
            <person name="Heilig R."/>
            <person name="Eckenberg R."/>
            <person name="Petit J.-L."/>
            <person name="Fonknechten N."/>
            <person name="Da Silva C."/>
            <person name="Cattolico L."/>
            <person name="Levy M."/>
            <person name="Barbe V."/>
            <person name="De Berardinis V."/>
            <person name="Ureta-Vidal A."/>
            <person name="Pelletier E."/>
            <person name="Vico V."/>
            <person name="Anthouard V."/>
            <person name="Rowen L."/>
            <person name="Madan A."/>
            <person name="Qin S."/>
            <person name="Sun H."/>
            <person name="Du H."/>
            <person name="Pepin K."/>
            <person name="Artiguenave F."/>
            <person name="Robert C."/>
            <person name="Cruaud C."/>
            <person name="Bruels T."/>
            <person name="Jaillon O."/>
            <person name="Friedlander L."/>
            <person name="Samson G."/>
            <person name="Brottier P."/>
            <person name="Cure S."/>
            <person name="Segurens B."/>
            <person name="Aniere F."/>
            <person name="Samain S."/>
            <person name="Crespeau H."/>
            <person name="Abbasi N."/>
            <person name="Aiach N."/>
            <person name="Boscus D."/>
            <person name="Dickhoff R."/>
            <person name="Dors M."/>
            <person name="Dubois I."/>
            <person name="Friedman C."/>
            <person name="Gouyvenoux M."/>
            <person name="James R."/>
            <person name="Madan A."/>
            <person name="Mairey-Estrada B."/>
            <person name="Mangenot S."/>
            <person name="Martins N."/>
            <person name="Menard M."/>
            <person name="Oztas S."/>
            <person name="Ratcliffe A."/>
            <person name="Shaffer T."/>
            <person name="Trask B."/>
            <person name="Vacherie B."/>
            <person name="Bellemere C."/>
            <person name="Belser C."/>
            <person name="Besnard-Gonnet M."/>
            <person name="Bartol-Mavel D."/>
            <person name="Boutard M."/>
            <person name="Briez-Silla S."/>
            <person name="Combette S."/>
            <person name="Dufosse-Laurent V."/>
            <person name="Ferron C."/>
            <person name="Lechaplais C."/>
            <person name="Louesse C."/>
            <person name="Muselet D."/>
            <person name="Magdelenat G."/>
            <person name="Pateau E."/>
            <person name="Petit E."/>
            <person name="Sirvain-Trukniewicz P."/>
            <person name="Trybou A."/>
            <person name="Vega-Czarny N."/>
            <person name="Bataille E."/>
            <person name="Bluet E."/>
            <person name="Bordelais I."/>
            <person name="Dubois M."/>
            <person name="Dumont C."/>
            <person name="Guerin T."/>
            <person name="Haffray S."/>
            <person name="Hammadi R."/>
            <person name="Muanga J."/>
            <person name="Pellouin V."/>
            <person name="Robert D."/>
            <person name="Wunderle E."/>
            <person name="Gauguet G."/>
            <person name="Roy A."/>
            <person name="Sainte-Marthe L."/>
            <person name="Verdier J."/>
            <person name="Verdier-Discala C."/>
            <person name="Hillier L.W."/>
            <person name="Fulton L."/>
            <person name="McPherson J."/>
            <person name="Matsuda F."/>
            <person name="Wilson R."/>
            <person name="Scarpelli C."/>
            <person name="Gyapay G."/>
            <person name="Wincker P."/>
            <person name="Saurin W."/>
            <person name="Quetier F."/>
            <person name="Waterston R."/>
            <person name="Hood L."/>
            <person name="Weissenbach J."/>
        </authorList>
    </citation>
    <scope>NUCLEOTIDE SEQUENCE [LARGE SCALE GENOMIC DNA]</scope>
</reference>
<reference key="6">
    <citation type="submission" date="2005-07" db="EMBL/GenBank/DDBJ databases">
        <authorList>
            <person name="Mural R.J."/>
            <person name="Istrail S."/>
            <person name="Sutton G.G."/>
            <person name="Florea L."/>
            <person name="Halpern A.L."/>
            <person name="Mobarry C.M."/>
            <person name="Lippert R."/>
            <person name="Walenz B."/>
            <person name="Shatkay H."/>
            <person name="Dew I."/>
            <person name="Miller J.R."/>
            <person name="Flanigan M.J."/>
            <person name="Edwards N.J."/>
            <person name="Bolanos R."/>
            <person name="Fasulo D."/>
            <person name="Halldorsson B.V."/>
            <person name="Hannenhalli S."/>
            <person name="Turner R."/>
            <person name="Yooseph S."/>
            <person name="Lu F."/>
            <person name="Nusskern D.R."/>
            <person name="Shue B.C."/>
            <person name="Zheng X.H."/>
            <person name="Zhong F."/>
            <person name="Delcher A.L."/>
            <person name="Huson D.H."/>
            <person name="Kravitz S.A."/>
            <person name="Mouchard L."/>
            <person name="Reinert K."/>
            <person name="Remington K.A."/>
            <person name="Clark A.G."/>
            <person name="Waterman M.S."/>
            <person name="Eichler E.E."/>
            <person name="Adams M.D."/>
            <person name="Hunkapiller M.W."/>
            <person name="Myers E.W."/>
            <person name="Venter J.C."/>
        </authorList>
    </citation>
    <scope>NUCLEOTIDE SEQUENCE [LARGE SCALE GENOMIC DNA]</scope>
</reference>
<reference key="7">
    <citation type="journal article" date="2004" name="Genome Res.">
        <title>The status, quality, and expansion of the NIH full-length cDNA project: the Mammalian Gene Collection (MGC).</title>
        <authorList>
            <consortium name="The MGC Project Team"/>
        </authorList>
    </citation>
    <scope>NUCLEOTIDE SEQUENCE [LARGE SCALE MRNA] (ISOFORM 2)</scope>
    <source>
        <tissue>Blood</tissue>
    </source>
</reference>
<reference key="8">
    <citation type="journal article" date="2007" name="BMC Genomics">
        <title>The full-ORF clone resource of the German cDNA consortium.</title>
        <authorList>
            <person name="Bechtel S."/>
            <person name="Rosenfelder H."/>
            <person name="Duda A."/>
            <person name="Schmidt C.P."/>
            <person name="Ernst U."/>
            <person name="Wellenreuther R."/>
            <person name="Mehrle A."/>
            <person name="Schuster C."/>
            <person name="Bahr A."/>
            <person name="Bloecker H."/>
            <person name="Heubner D."/>
            <person name="Hoerlein A."/>
            <person name="Michel G."/>
            <person name="Wedler H."/>
            <person name="Koehrer K."/>
            <person name="Ottenwaelder B."/>
            <person name="Poustka A."/>
            <person name="Wiemann S."/>
            <person name="Schupp I."/>
        </authorList>
    </citation>
    <scope>NUCLEOTIDE SEQUENCE [LARGE SCALE MRNA] OF 79-635</scope>
    <source>
        <tissue>Uterus</tissue>
    </source>
</reference>
<reference key="9">
    <citation type="journal article" date="2000" name="Gene">
        <title>Cloning and characterization of the genes encoding the ankyrin repeat and SOCS box-containing proteins Asb-1, Asb-2, Asb-3 and Asb-4.</title>
        <authorList>
            <person name="Kile B.T."/>
            <person name="Viney E.M."/>
            <person name="Willson T.A."/>
            <person name="Brodnicki T.C."/>
            <person name="Cancilla M.R."/>
            <person name="Herlihy A.S."/>
            <person name="Croker B.A."/>
            <person name="Baca M."/>
            <person name="Nicola N.A."/>
            <person name="Hilton D.J."/>
            <person name="Alexander W.S."/>
        </authorList>
    </citation>
    <scope>NUCLEOTIDE SEQUENCE [MRNA] OF 90-635</scope>
</reference>
<reference key="10">
    <citation type="journal article" date="2005" name="FEBS Lett.">
        <title>ASB proteins interact with cullin5 and Rbx2 to form E3 ubiquitin ligase complexes.</title>
        <authorList>
            <person name="Kohroki J."/>
            <person name="Nishiyama T."/>
            <person name="Nakamura T."/>
            <person name="Masuho Y."/>
        </authorList>
    </citation>
    <scope>FUNCTION</scope>
    <scope>SUBUNIT</scope>
    <scope>INTERACTION WITH CUL5 AND RNF7</scope>
    <scope>MUTAGENESIS OF 599-LEU-CYS-600 AND 619-LEU--PRO-622</scope>
</reference>
<reference key="11">
    <citation type="journal article" date="2005" name="J. Biol. Chem.">
        <title>ASB2 is an elongin BC-interacting protein that can assemble with cullin 5 and Rbx1 to reconstitute an E3 ubiquitin ligase complex.</title>
        <authorList>
            <person name="Heuze M.L."/>
            <person name="Guibal F.C."/>
            <person name="Banks C.A."/>
            <person name="Conaway J.W."/>
            <person name="Conaway R.C."/>
            <person name="Cayre Y.E."/>
            <person name="Benecke A."/>
            <person name="Lutz P.G."/>
        </authorList>
    </citation>
    <scope>FUNCTION</scope>
    <scope>SUBUNIT</scope>
    <scope>INTERACTION WITH ELOC</scope>
    <scope>MUTAGENESIS OF LEU-596 AND CYS-600</scope>
</reference>
<reference key="12">
    <citation type="journal article" date="2009" name="Cell Death Differ.">
        <title>The E3 ubiquitin ligase specificity subunit ASB2beta is a novel regulator of muscle differentiation that targets filamin B to proteasomal degradation.</title>
        <authorList>
            <person name="Bello N.F."/>
            <person name="Lamsoul I."/>
            <person name="Heuze M.L."/>
            <person name="Metais A."/>
            <person name="Moreaux G."/>
            <person name="Calderwood D.A."/>
            <person name="Duprez D."/>
            <person name="Moog-Lutz C."/>
            <person name="Lutz P.G."/>
        </authorList>
    </citation>
    <scope>FUNCTION (ISOFORM 1)</scope>
    <scope>SUBUNIT</scope>
    <scope>ALTERNATIVE SPLICING</scope>
    <scope>TISSUE SPECIFICITY</scope>
</reference>
<reference key="13">
    <citation type="journal article" date="2011" name="Cell Res.">
        <title>Notch-induced Asb2 expression promotes protein ubiquitination by forming non-canonical E3 ligase complexes.</title>
        <authorList>
            <person name="Nie L."/>
            <person name="Zhao Y."/>
            <person name="Wu W."/>
            <person name="Yang Y.Z."/>
            <person name="Wang H.C."/>
            <person name="Sun X.H."/>
        </authorList>
    </citation>
    <scope>FUNCTION</scope>
    <scope>INTERACTION WITH CUL5; ELOB; ELOC; JAK2 AND SKP2</scope>
    <scope>INDUCTION</scope>
    <scope>DOMAIN SOCS BOX</scope>
</reference>
<reference key="14">
    <citation type="journal article" date="2011" name="J. Biol. Chem.">
        <title>Functional and structural insights into ASB2alpha, a novel regulator of integrin-dependent adhesion of hematopoietic cells.</title>
        <authorList>
            <person name="Lamsoul I."/>
            <person name="Burande C.F."/>
            <person name="Razinia Z."/>
            <person name="Houles T.C."/>
            <person name="Menoret D."/>
            <person name="Baldassarre M."/>
            <person name="Erard M."/>
            <person name="Moog-Lutz C."/>
            <person name="Calderwood D.A."/>
            <person name="Lutz P.G."/>
        </authorList>
    </citation>
    <scope>FUNCTION</scope>
    <scope>ALTERNATIVE SPLICING</scope>
</reference>
<reference key="15">
    <citation type="journal article" date="2012" name="Biochem. Biophys. Res. Commun.">
        <title>The ASB2beta Ubiquitin-interacting motif is involved in its monoubiquitination.</title>
        <authorList>
            <person name="Nishiyama T."/>
            <person name="Kuroda S."/>
            <person name="Takiguchi E."/>
            <person name="Nakamura T."/>
            <person name="Hashimoto K."/>
            <person name="Tsuzuranuki K."/>
            <person name="Kawakami T."/>
            <person name="Masuho Y."/>
            <person name="Kohroki J."/>
        </authorList>
    </citation>
    <scope>UBIQUITINATION (ISOFORM 1)</scope>
    <scope>UIM DOMAIN (ISOFORM 1)</scope>
    <scope>MUTAGENESIS OF 27-GLU--GLU-29 AND SER-38 (ISOFORM 1)</scope>
</reference>
<reference key="16">
    <citation type="journal article" date="2012" name="PLoS ONE">
        <title>Filamins but not Janus kinases are substrates of the ASB2alpha cullin-ring E3 ubiquitin ligase in hematopoietic cells.</title>
        <authorList>
            <person name="Lamsoul I."/>
            <person name="Erard M."/>
            <person name="van der Ven P.F."/>
            <person name="Lutz P.G."/>
        </authorList>
    </citation>
    <scope>FUNCTION (ISOFORM 2)</scope>
</reference>
<reference key="17">
    <citation type="journal article" date="2013" name="Cell. Signal.">
        <title>Phosphorylation of serine 323 of ASB2alpha is pivotal for the targeting of filamin A to degradation.</title>
        <authorList>
            <person name="Zakaria R."/>
            <person name="Lamsoul I."/>
            <person name="Uttenweiler-Joseph S."/>
            <person name="Erard M."/>
            <person name="Monsarrat B."/>
            <person name="Burlet-Schiltz O."/>
            <person name="Moog-Lutz C."/>
            <person name="Lutz P.G."/>
        </authorList>
    </citation>
    <scope>FUNCTION (ISOFORM 2)</scope>
    <scope>SUBUNIT</scope>
    <scope>SUBCELLULAR LOCATION</scope>
    <scope>PHOSPHORYLATION AT SER-371</scope>
    <scope>MUTAGENESIS OF SER-371</scope>
</reference>
<reference key="18">
    <citation type="journal article" date="2013" name="J. Biol. Chem.">
        <title>ASB2alpha, an E3 ubiquitin ligase specificity subunit, regulates cell spreading and triggers proteasomal degradation of filamins by targeting the filamin calponin homology 1 domain.</title>
        <authorList>
            <person name="Razinia Z."/>
            <person name="Baldassarre M."/>
            <person name="Cantelli G."/>
            <person name="Calderwood D.A."/>
        </authorList>
    </citation>
    <scope>FUNCTION (ISOFORM 2)</scope>
</reference>
<reference key="19">
    <citation type="journal article" date="2018" name="Cell Death Dis.">
        <title>High-throughput analysis of the RNA-induced silencing complex in myotonic dystrophy type 1 patients identifies the dysregulation of miR-29c and its target ASB2.</title>
        <authorList>
            <person name="Cappella M."/>
            <person name="Perfetti A."/>
            <person name="Cardinali B."/>
            <person name="Garcia-Manteiga J.M."/>
            <person name="Carrara M."/>
            <person name="Provenzano C."/>
            <person name="Fuschi P."/>
            <person name="Cardani R."/>
            <person name="Renna L.V."/>
            <person name="Meola G."/>
            <person name="Falcone G."/>
            <person name="Martelli F."/>
        </authorList>
    </citation>
    <scope>INDUCTION</scope>
</reference>
<reference key="20">
    <citation type="journal article" date="2020" name="IScience">
        <title>Loss of Asb2 Impairs Cardiomyocyte Differentiation and Leads to Congenital Double Outlet Right Ventricle.</title>
        <authorList>
            <person name="Yamak A."/>
            <person name="Hu D."/>
            <person name="Mittal N."/>
            <person name="Buikema J.W."/>
            <person name="Ditta S."/>
            <person name="Lutz P.G."/>
            <person name="Moog-Lutz C."/>
            <person name="Ellinor P.T."/>
            <person name="Domian I.J."/>
        </authorList>
    </citation>
    <scope>FUNCTION</scope>
</reference>
<reference key="21">
    <citation type="journal article" date="2021" name="Sci. Rep.">
        <title>ASB2 is a novel E3 ligase of SMAD9 required for cardiogenesis.</title>
        <authorList>
            <person name="Min K.D."/>
            <person name="Asakura M."/>
            <person name="Shirai M."/>
            <person name="Yamazaki S."/>
            <person name="Ito S."/>
            <person name="Fu H.Y."/>
            <person name="Asanuma H."/>
            <person name="Asano Y."/>
            <person name="Minamino T."/>
            <person name="Takashima S."/>
            <person name="Kitakaze M."/>
        </authorList>
    </citation>
    <scope>FUNCTION</scope>
</reference>
<proteinExistence type="evidence at protein level"/>
<accession>Q96Q27</accession>
<accession>B2RDP9</accession>
<accession>B4E166</accession>
<accession>Q9NSU5</accession>
<accession>Q9Y567</accession>
<protein>
    <recommendedName>
        <fullName>Ankyrin repeat and SOCS box protein 2</fullName>
        <shortName>ASB-2</shortName>
    </recommendedName>
</protein>
<comment type="function">
    <text evidence="1 7 8 10 17 18">Substrate-recognition component of a SCF-like ECS (Elongin-Cullin-SOCS-box protein) E3 ubiquitin-protein ligase complex which mediates the ubiquitination and subsequent proteasomal degradation of target proteins (PubMed:15590664, PubMed:16325183). Mediates Notch-induced ubiquitination and degradation of substrates including TCF3/E2A and JAK2 (PubMed:21119685). Required during embryonic heart development for complete heart looping (By similarity). Required for cardiomyocyte differentiation (PubMed:32179481). Specifically promotes the ubiquitination of SMAD9 and targets it for proteasomal degradation, leading to avoid excessive accumulation of SMAD9 (PubMed:34845242). Plays a role in the regulation of NK-cell migration by modulating protein levels of filamin A/FLNA via regulation of its ubiquitination and proteasome degradation (By similarity).</text>
</comment>
<comment type="function">
    <molecule>Isoform 1</molecule>
    <text evidence="1 9">Involved in myogenic differentiation and targets filamin FLNB for proteasomal degradation but not filamin FLNA (PubMed:19300455). Also targets DES for proteasomal degradation (By similarity). Acts as a negative regulator of skeletal muscle mass (By similarity).</text>
</comment>
<comment type="function">
    <molecule>Isoform 2</molecule>
    <text evidence="1 11 13 14 15">Targets filamins FLNA and FLNB for proteasomal degradation (PubMed:21737450, PubMed:22916308, PubMed:24044920, PubMed:24052262). This leads to enhanced adhesion of hematopoietic cells to fibronectin (PubMed:21737450). Required for FLNA degradation in immature cardiomyocytes which is necessary for actin cytoskeleton remodeling, leading to proper organization of myofibrils and function of mature cardiomyocytes (By similarity). Required for degradation of FLNA and FLNB in immature dendritic cells (DC) which enhances immature DC migration by promoting DC podosome formation and DC-mediated degradation of the extracellular matrix (By similarity). Does not promote proteasomal degradation of tyrosine-protein kinases JAK1 or JAK2 in hematopoietic cells (PubMed:22916308).</text>
</comment>
<comment type="pathway">
    <text>Protein modification; protein ubiquitination.</text>
</comment>
<comment type="subunit">
    <text evidence="7 8 9 10 14">Component of a probable ECS E3 ubiquitin-protein ligase complex which contains CUL5, either RBX1 or RNF7/RBX2, Elongin BC complex (ELOB and ELOC) and ASB2 (PubMed:15590664, PubMed:16325183, PubMed:19300455, PubMed:21119685, PubMed:24044920). Interacts with SKP2 (PubMed:21119685). Through its interaction with SKP2, likely to bridge the formation of dimeric E3-ubiquitin-protein ligase complexes composed of an ECS complex and an SCF(SKP2) complex (PubMed:21119685). Interacts with JAK2; the interaction targets JAK2 for Notch-mediated proteasomal degradation (PubMed:21119685). Interacts with TCF3/E2A; the interaction is mediated by SKP2 and targets TCF3 for Notch-mediated proteasomal degradation (PubMed:21119685).</text>
</comment>
<comment type="subunit">
    <molecule>Isoform 1</molecule>
    <text evidence="1">Interacts with DES.</text>
</comment>
<comment type="interaction">
    <interactant intactId="EBI-28950233">
        <id>Q96Q27-2</id>
    </interactant>
    <interactant intactId="EBI-1057139">
        <id>Q93034</id>
        <label>CUL5</label>
    </interactant>
    <organismsDiffer>false</organismsDiffer>
    <experiments>3</experiments>
</comment>
<comment type="subcellular location">
    <subcellularLocation>
        <location evidence="14">Cytoplasm</location>
        <location evidence="14">Cytoskeleton</location>
        <location evidence="14">Stress fiber</location>
    </subcellularLocation>
</comment>
<comment type="subcellular location">
    <molecule>Isoform 1</molecule>
    <subcellularLocation>
        <location evidence="1">Cytoplasm</location>
        <location evidence="1">Myofibril</location>
        <location evidence="1">Sarcomere</location>
        <location evidence="1">Z line</location>
    </subcellularLocation>
    <text evidence="1">Localizes to the Z line in cardiomyocytes.</text>
</comment>
<comment type="alternative products">
    <event type="alternative splicing"/>
    <isoform>
        <id>Q96Q27-2</id>
        <name>1</name>
        <name>ASB2beta</name>
        <name evidence="19">muscle-type</name>
        <sequence type="displayed"/>
    </isoform>
    <isoform>
        <id>Q96Q27-1</id>
        <name>2</name>
        <name>ASB2alpha</name>
        <name evidence="19">hematopoietic-type</name>
        <sequence type="described" ref="VSP_061164"/>
    </isoform>
</comment>
<comment type="tissue specificity">
    <molecule>Isoform 1</molecule>
    <text evidence="9">Expressed in muscle cells.</text>
</comment>
<comment type="tissue specificity">
    <molecule>Isoform 2</molecule>
    <text evidence="9">Expressed in hematopoietic cells.</text>
</comment>
<comment type="induction">
    <text evidence="5 6 10 16">Induced by all-trans retinoic acid (ATRA) (PubMed:11566180, PubMed:11682484). Induced by Notch signaling (PubMed:21119685). Repressed by microRNA miR-29c (PubMed:29955039).</text>
</comment>
<comment type="domain">
    <text evidence="10">The SOCS box domain mediates the interaction with the Elongin BC complex, an adapter module in different E3 ubiquitin-protein ligase complexes.</text>
</comment>
<comment type="domain">
    <molecule>Isoform 2</molecule>
    <text evidence="11">Both the N-terminus and ANK repeats 1 to 10 are necessary for interaction with filamins.</text>
</comment>
<comment type="domain">
    <molecule>Isoform 1</molecule>
    <text evidence="12">The UIM domain is required for monoubiquitination.</text>
</comment>
<comment type="PTM">
    <molecule>Isoform 1</molecule>
    <text evidence="12">Monoubiquitinated.</text>
</comment>
<comment type="PTM">
    <molecule>Isoform 2</molecule>
    <text evidence="12">Not monoubiquitinated.</text>
</comment>
<comment type="PTM">
    <molecule>Isoform 2</molecule>
    <text evidence="14">Phosphorylation at Ser-371 is required for association with FLNA and subsequent FLNA degradation.</text>
</comment>
<comment type="similarity">
    <text evidence="20">Belongs to the ankyrin SOCS box (ASB) family.</text>
</comment>
<sequence length="635" mass="70212">MATQISTRGSQCTIGQEEYSLYSSLSEDELVQMAIEQSLADKTRGPTTAEATASACTNRQPAHFYPWTRSTAPPESSPARAPMGLFQGVMQKYSSSLFKTSQLAPADPLIKAIKDGDEEALKTMIKEGKNLAEPNKEGWLPLHEAAYYGQVGCLKVLQRAYPGTIDQRTLQEETAVYLATCRGHLDCLLSLLQAGAEPDISNKSRETPLYKACERKNAEAVKILVQHNADTNHRCNRGWTALHESVSRNDLEVMQILVSGGAKVESKNAYGITPLFVAAQSGQLEALRFLAKYGADINTQASDNASALYEACKNEHEEVVEFLLSQGADANKTNKDGLLPLHIASKKGNYRIVQMLLPVTSRTRIRRSGVSPLHLAAERNHDEVLEALLSARFDVNTPLAPERARLYEDRRSSALYFAVVNNNVYATELLLQHGADPNRDVISPLLVAIRHGCLRTMQLLLDHGANIDAYIATHPTAFPATIMFAMKCLSLLKFLMDLGCDGEPCFSCLYGNGPHPPAPQPSSRFNDAPAADKEPSVVQFCEFVSAPEVSRWAGPIIDVLLDYVGNVQLCSRLKEHIDSFEDWAVIKEKAEPPRPLAHLCRLRVRKAIGKYRIKLLDTLPLPGRLIRYLKYENTQ</sequence>